<proteinExistence type="evidence at protein level"/>
<gene>
    <name type="primary">sspH2</name>
    <name type="ordered locus">STM2241</name>
</gene>
<comment type="function">
    <text evidence="1">Effector proteins function to alter host cell physiology and promote bacterial survival in host tissues. This protein is an E3 ubiquitin ligase that interferes with host's ubiquitination pathway.</text>
</comment>
<comment type="catalytic activity">
    <reaction>
        <text>S-ubiquitinyl-[E2 ubiquitin-conjugating enzyme]-L-cysteine + [acceptor protein]-L-lysine = [E2 ubiquitin-conjugating enzyme]-L-cysteine + N(6)-ubiquitinyl-[acceptor protein]-L-lysine.</text>
        <dbReference type="EC" id="2.3.2.27"/>
    </reaction>
</comment>
<comment type="activity regulation">
    <text evidence="3">Exists in an autoinhibited state in the absence of substrate protein, due to interactions of the leucine-rich repeat domain with the catalytic domain. Is activated upon binding to a substrate protein.</text>
</comment>
<comment type="interaction">
    <interactant intactId="EBI-10761075">
        <id>P0CE12</id>
    </interactant>
    <interactant intactId="EBI-348268">
        <id>P61077</id>
        <label>UBE2D3</label>
    </interactant>
    <organismsDiffer>true</organismsDiffer>
    <experiments>7</experiments>
</comment>
<comment type="subcellular location">
    <subcellularLocation>
        <location evidence="1">Secreted</location>
    </subcellularLocation>
    <subcellularLocation>
        <location evidence="1">Host cytoplasm</location>
    </subcellularLocation>
    <subcellularLocation>
        <location evidence="1">Host apical cell membrane</location>
        <topology evidence="1">Peripheral membrane protein</topology>
        <orientation evidence="1">Cytoplasmic side</orientation>
    </subcellularLocation>
    <text evidence="1">Secreted via type III secretion system 2 (SPI-2 T3SS), and delivered into the host cytoplasm.</text>
</comment>
<comment type="domain">
    <text evidence="3">The LRR (leucine-rich repeat) domain is involved in autoinhibition of the enzyme activity by interacting with the catalytic domain.</text>
</comment>
<comment type="PTM">
    <text evidence="1">Ubiquitinated in the presence of host E1 ubiquitin-activating enzyme UBA1, E2 ubiquitin-conjugating enzyme UBE2D2 and ubiquitin.</text>
</comment>
<comment type="similarity">
    <text evidence="2 4">Belongs to the LRR-containing bacterial E3 ligase family.</text>
</comment>
<reference key="1">
    <citation type="journal article" date="2001" name="Nature">
        <title>Complete genome sequence of Salmonella enterica serovar Typhimurium LT2.</title>
        <authorList>
            <person name="McClelland M."/>
            <person name="Sanderson K.E."/>
            <person name="Spieth J."/>
            <person name="Clifton S.W."/>
            <person name="Latreille P."/>
            <person name="Courtney L."/>
            <person name="Porwollik S."/>
            <person name="Ali J."/>
            <person name="Dante M."/>
            <person name="Du F."/>
            <person name="Hou S."/>
            <person name="Layman D."/>
            <person name="Leonard S."/>
            <person name="Nguyen C."/>
            <person name="Scott K."/>
            <person name="Holmes A."/>
            <person name="Grewal N."/>
            <person name="Mulvaney E."/>
            <person name="Ryan E."/>
            <person name="Sun H."/>
            <person name="Florea L."/>
            <person name="Miller W."/>
            <person name="Stoneking T."/>
            <person name="Nhan M."/>
            <person name="Waterston R."/>
            <person name="Wilson R.K."/>
        </authorList>
    </citation>
    <scope>NUCLEOTIDE SEQUENCE [LARGE SCALE GENOMIC DNA]</scope>
    <source>
        <strain>LT2 / SGSC1412 / ATCC 700720</strain>
    </source>
</reference>
<reference key="2">
    <citation type="journal article" date="2009" name="Proc. Natl. Acad. Sci. U.S.A.">
        <title>A family of Salmonella virulence factors functions as a distinct class of autoregulated E3 ubiquitin ligases.</title>
        <authorList>
            <person name="Quezada C.M."/>
            <person name="Hicks S.W."/>
            <person name="Galan J.E."/>
            <person name="Stebbins C.E."/>
        </authorList>
    </citation>
    <scope>X-RAY CRYSTALLOGRAPHY (1.9 ANGSTROMS) OF 166-783</scope>
    <scope>DOMAIN</scope>
    <scope>ACTIVITY REGULATION</scope>
    <source>
        <strain>LT2 / SGSC1412 / ATCC 700720</strain>
    </source>
</reference>
<protein>
    <recommendedName>
        <fullName>E3 ubiquitin-protein ligase SspH2</fullName>
        <ecNumber>2.3.2.27</ecNumber>
    </recommendedName>
    <alternativeName>
        <fullName evidence="4">RING-type E3 ubiquitin transferase SspH2</fullName>
    </alternativeName>
    <alternativeName>
        <fullName>Salmonella secreted protein H2</fullName>
    </alternativeName>
    <alternativeName>
        <fullName>Secreted effector protein sspH2</fullName>
    </alternativeName>
</protein>
<organism>
    <name type="scientific">Salmonella typhimurium (strain LT2 / SGSC1412 / ATCC 700720)</name>
    <dbReference type="NCBI Taxonomy" id="99287"/>
    <lineage>
        <taxon>Bacteria</taxon>
        <taxon>Pseudomonadati</taxon>
        <taxon>Pseudomonadota</taxon>
        <taxon>Gammaproteobacteria</taxon>
        <taxon>Enterobacterales</taxon>
        <taxon>Enterobacteriaceae</taxon>
        <taxon>Salmonella</taxon>
    </lineage>
</organism>
<dbReference type="EC" id="2.3.2.27"/>
<dbReference type="EMBL" id="AE006468">
    <property type="protein sequence ID" value="AAL21143.1"/>
    <property type="molecule type" value="Genomic_DNA"/>
</dbReference>
<dbReference type="RefSeq" id="NP_461184.1">
    <property type="nucleotide sequence ID" value="NC_003197.2"/>
</dbReference>
<dbReference type="RefSeq" id="WP_001115840.1">
    <property type="nucleotide sequence ID" value="NC_003197.2"/>
</dbReference>
<dbReference type="PDB" id="3G06">
    <property type="method" value="X-ray"/>
    <property type="resolution" value="1.90 A"/>
    <property type="chains" value="A=166-783"/>
</dbReference>
<dbReference type="PDBsum" id="3G06"/>
<dbReference type="SMR" id="P0CE12"/>
<dbReference type="DIP" id="DIP-59215N"/>
<dbReference type="IntAct" id="P0CE12">
    <property type="interactions" value="1"/>
</dbReference>
<dbReference type="STRING" id="99287.STM2241"/>
<dbReference type="PaxDb" id="99287-STM2241"/>
<dbReference type="GeneID" id="1253763"/>
<dbReference type="KEGG" id="stm:STM2241"/>
<dbReference type="PATRIC" id="fig|99287.12.peg.2374"/>
<dbReference type="HOGENOM" id="CLU_018533_1_0_6"/>
<dbReference type="OMA" id="CIREICH"/>
<dbReference type="PhylomeDB" id="P0CE12"/>
<dbReference type="BioCyc" id="SENT99287:STM2241-MONOMER"/>
<dbReference type="EvolutionaryTrace" id="P0CE12"/>
<dbReference type="Proteomes" id="UP000001014">
    <property type="component" value="Chromosome"/>
</dbReference>
<dbReference type="GO" id="GO:0005576">
    <property type="term" value="C:extracellular region"/>
    <property type="evidence" value="ECO:0007669"/>
    <property type="project" value="UniProtKB-SubCell"/>
</dbReference>
<dbReference type="GO" id="GO:0030430">
    <property type="term" value="C:host cell cytoplasm"/>
    <property type="evidence" value="ECO:0007669"/>
    <property type="project" value="UniProtKB-SubCell"/>
</dbReference>
<dbReference type="GO" id="GO:0020002">
    <property type="term" value="C:host cell plasma membrane"/>
    <property type="evidence" value="ECO:0007669"/>
    <property type="project" value="UniProtKB-SubCell"/>
</dbReference>
<dbReference type="GO" id="GO:0016020">
    <property type="term" value="C:membrane"/>
    <property type="evidence" value="ECO:0007669"/>
    <property type="project" value="UniProtKB-KW"/>
</dbReference>
<dbReference type="GO" id="GO:0003824">
    <property type="term" value="F:catalytic activity"/>
    <property type="evidence" value="ECO:0000315"/>
    <property type="project" value="AgBase"/>
</dbReference>
<dbReference type="GO" id="GO:0061630">
    <property type="term" value="F:ubiquitin protein ligase activity"/>
    <property type="evidence" value="ECO:0000315"/>
    <property type="project" value="AgBase"/>
</dbReference>
<dbReference type="GO" id="GO:0004842">
    <property type="term" value="F:ubiquitin-protein transferase activity"/>
    <property type="evidence" value="ECO:0000250"/>
    <property type="project" value="UniProtKB"/>
</dbReference>
<dbReference type="GO" id="GO:0032757">
    <property type="term" value="P:positive regulation of interleukin-8 production"/>
    <property type="evidence" value="ECO:0000314"/>
    <property type="project" value="AgBase"/>
</dbReference>
<dbReference type="GO" id="GO:0070430">
    <property type="term" value="P:positive regulation of nucleotide-binding oligomerization domain containing 1 signaling pathway"/>
    <property type="evidence" value="ECO:0000315"/>
    <property type="project" value="AgBase"/>
</dbReference>
<dbReference type="GO" id="GO:0034052">
    <property type="term" value="P:positive regulation of plant-type hypersensitive response"/>
    <property type="evidence" value="ECO:0000315"/>
    <property type="project" value="AgBase"/>
</dbReference>
<dbReference type="GO" id="GO:0030254">
    <property type="term" value="P:protein secretion by the type III secretion system"/>
    <property type="evidence" value="ECO:0000250"/>
    <property type="project" value="UniProtKB"/>
</dbReference>
<dbReference type="GO" id="GO:0016567">
    <property type="term" value="P:protein ubiquitination"/>
    <property type="evidence" value="ECO:0000250"/>
    <property type="project" value="UniProtKB"/>
</dbReference>
<dbReference type="GO" id="GO:0052553">
    <property type="term" value="P:symbiont-mediated perturbation of host immune response"/>
    <property type="evidence" value="ECO:0000269"/>
    <property type="project" value="SigSci"/>
</dbReference>
<dbReference type="FunFam" id="1.20.58.360:FF:000001">
    <property type="entry name" value="Probable E3 ubiquitin-protein ligase ipaH7.8"/>
    <property type="match status" value="1"/>
</dbReference>
<dbReference type="FunFam" id="3.30.2440.10:FF:000001">
    <property type="entry name" value="SPI-2 type III secretion system effector SseI"/>
    <property type="match status" value="1"/>
</dbReference>
<dbReference type="FunFam" id="1.20.1270.130:FF:000002">
    <property type="entry name" value="Type III secretion system effector protein-E3 Ubiquitin ligase"/>
    <property type="match status" value="1"/>
</dbReference>
<dbReference type="FunFam" id="1.20.58.90:FF:000013">
    <property type="entry name" value="Type III secretion system effector protein-E3 Ubiquitin ligase"/>
    <property type="match status" value="1"/>
</dbReference>
<dbReference type="Gene3D" id="1.20.58.90">
    <property type="match status" value="1"/>
</dbReference>
<dbReference type="Gene3D" id="3.80.10.10">
    <property type="entry name" value="Ribonuclease Inhibitor"/>
    <property type="match status" value="1"/>
</dbReference>
<dbReference type="Gene3D" id="3.30.2440.10">
    <property type="entry name" value="Secreted effector protein SifA"/>
    <property type="match status" value="1"/>
</dbReference>
<dbReference type="Gene3D" id="1.20.58.360">
    <property type="entry name" value="Shigella T3SS effector IpaH defines"/>
    <property type="match status" value="1"/>
</dbReference>
<dbReference type="Gene3D" id="1.20.1270.130">
    <property type="entry name" value="Shigella T3SS effector IpaH domain"/>
    <property type="match status" value="1"/>
</dbReference>
<dbReference type="InterPro" id="IPR001611">
    <property type="entry name" value="Leu-rich_rpt"/>
</dbReference>
<dbReference type="InterPro" id="IPR003591">
    <property type="entry name" value="Leu-rich_rpt_typical-subtyp"/>
</dbReference>
<dbReference type="InterPro" id="IPR051071">
    <property type="entry name" value="LRR-bact_E3_ubiq_ligases"/>
</dbReference>
<dbReference type="InterPro" id="IPR032675">
    <property type="entry name" value="LRR_dom_sf"/>
</dbReference>
<dbReference type="InterPro" id="IPR029487">
    <property type="entry name" value="NEL_dom"/>
</dbReference>
<dbReference type="NCBIfam" id="NF011917">
    <property type="entry name" value="PRK15387.1"/>
    <property type="match status" value="1"/>
</dbReference>
<dbReference type="PANTHER" id="PTHR47114">
    <property type="match status" value="1"/>
</dbReference>
<dbReference type="PANTHER" id="PTHR47114:SF2">
    <property type="entry name" value="OLIGODENDROCYTE-MYELIN GLYCOPROTEIN"/>
    <property type="match status" value="1"/>
</dbReference>
<dbReference type="Pfam" id="PF14496">
    <property type="entry name" value="NEL"/>
    <property type="match status" value="1"/>
</dbReference>
<dbReference type="SMART" id="SM00364">
    <property type="entry name" value="LRR_BAC"/>
    <property type="match status" value="11"/>
</dbReference>
<dbReference type="SMART" id="SM00369">
    <property type="entry name" value="LRR_TYP"/>
    <property type="match status" value="5"/>
</dbReference>
<dbReference type="SUPFAM" id="SSF52058">
    <property type="entry name" value="L domain-like"/>
    <property type="match status" value="1"/>
</dbReference>
<dbReference type="PROSITE" id="PS51450">
    <property type="entry name" value="LRR"/>
    <property type="match status" value="8"/>
</dbReference>
<dbReference type="PROSITE" id="PS52053">
    <property type="entry name" value="NEL"/>
    <property type="match status" value="1"/>
</dbReference>
<accession>P0CE12</accession>
<accession>Q7CQ69</accession>
<accession>Q9RPH0</accession>
<keyword id="KW-0002">3D-structure</keyword>
<keyword id="KW-1032">Host cell membrane</keyword>
<keyword id="KW-1035">Host cytoplasm</keyword>
<keyword id="KW-1043">Host membrane</keyword>
<keyword id="KW-0433">Leucine-rich repeat</keyword>
<keyword id="KW-0472">Membrane</keyword>
<keyword id="KW-1185">Reference proteome</keyword>
<keyword id="KW-0677">Repeat</keyword>
<keyword id="KW-0964">Secreted</keyword>
<keyword id="KW-0808">Transferase</keyword>
<keyword id="KW-0832">Ubl conjugation</keyword>
<keyword id="KW-0833">Ubl conjugation pathway</keyword>
<keyword id="KW-0843">Virulence</keyword>
<sequence length="788" mass="87223">MPFHIGSGCLPATISNRRIYRIAWSDTPPEMSSWEKMKEFFCSTHQTEALECIWTICHPPAGTTREDVINRFELLRTLAYAGWEESIHSGQHGENYFCILDEDSQEILSVTLDDAGNYTVNCQGYSETHRLTLDTAQGEEGTGHAEGASGTFRTSFLPATTAPQTPAEYDAVWSAWRRAAPAEESRGRAAVVQKMRACLNNGNAVLNVGESGLTTLPDCLPAHITTLVIPDNNLTSLPALPPELRTLEVSGNQLTSLPVLPPGLLELSIFSNPLTHLPALPSGLCKLWIFGNQLTSLPVLPPGLQELSVSDNQLASLPALPSELCKLWAYNNQLTSLPMLPSGLQELSVSDNQLASLPTLPSELYKLWAYNNRLTSLPALPSGLKELIVSGNRLTSLPVLPSELKELMVSGNRLTSLPMLPSGLLSLSVYRNQLTRLPESLIHLSSETTVNLEGNPLSERTLQALREITSAPGYSGPIIRFDMAGASAPRETRALHLAAADWLVPAREGEPAPADRWHMFGQEDNADAFSLFLDRLSETENFIKDAGFKAQISSWLAQLAEDEALRANTFAMATEATSSCEDRVTFFLHQMKNVQLVHNAEKGQYDNDLAALVATGREMFRLGKLEQIAREKVRTLALVDEIEVWLAYQNKLKKSLGLTSVTSEMRFFDVSGVTVTDLQDAELQVKAAEKSEFREWILQWGPLHRVLERKAPERVNALREKQISDYEETYRMLSDTELRPSGLVGNTDAERTIGARAMESAKKTFLDGLRPLVEEMLGSYLNVQWRRN</sequence>
<feature type="chain" id="PRO_0000391758" description="E3 ubiquitin-protein ligase SspH2">
    <location>
        <begin position="1"/>
        <end position="788"/>
    </location>
</feature>
<feature type="repeat" description="LRR 1">
    <location>
        <begin position="223"/>
        <end position="242"/>
    </location>
</feature>
<feature type="repeat" description="LRR 2">
    <location>
        <begin position="243"/>
        <end position="264"/>
    </location>
</feature>
<feature type="repeat" description="LRR 3">
    <location>
        <begin position="265"/>
        <end position="282"/>
    </location>
</feature>
<feature type="repeat" description="LRR 4">
    <location>
        <begin position="283"/>
        <end position="302"/>
    </location>
</feature>
<feature type="repeat" description="LRR 5">
    <location>
        <begin position="303"/>
        <end position="324"/>
    </location>
</feature>
<feature type="repeat" description="LRR 6">
    <location>
        <begin position="325"/>
        <end position="342"/>
    </location>
</feature>
<feature type="repeat" description="LRR 7">
    <location>
        <begin position="343"/>
        <end position="364"/>
    </location>
</feature>
<feature type="repeat" description="LRR 8">
    <location>
        <begin position="365"/>
        <end position="382"/>
    </location>
</feature>
<feature type="repeat" description="LRR 9">
    <location>
        <begin position="383"/>
        <end position="404"/>
    </location>
</feature>
<feature type="repeat" description="LRR 10">
    <location>
        <begin position="405"/>
        <end position="422"/>
    </location>
</feature>
<feature type="repeat" description="LRR 11">
    <location>
        <begin position="423"/>
        <end position="445"/>
    </location>
</feature>
<feature type="repeat" description="LRR 12">
    <location>
        <begin position="446"/>
        <end position="466"/>
    </location>
</feature>
<feature type="domain" description="NEL" evidence="2">
    <location>
        <begin position="494"/>
        <end position="788"/>
    </location>
</feature>
<feature type="region of interest" description="Interaction with host membrane and with target proteins" evidence="5">
    <location>
        <begin position="1"/>
        <end position="481"/>
    </location>
</feature>
<feature type="region of interest" description="Linker" evidence="5">
    <location>
        <begin position="482"/>
        <end position="491"/>
    </location>
</feature>
<feature type="region of interest" description="E3 ubiquitin-protein ligase catalytic domain" evidence="5">
    <location>
        <begin position="492"/>
        <end position="788"/>
    </location>
</feature>
<feature type="active site" description="Glycyl thioester intermediate" evidence="2">
    <location>
        <position position="580"/>
    </location>
</feature>
<feature type="helix" evidence="6">
    <location>
        <begin position="172"/>
        <end position="178"/>
    </location>
</feature>
<feature type="helix" evidence="6">
    <location>
        <begin position="182"/>
        <end position="184"/>
    </location>
</feature>
<feature type="helix" evidence="6">
    <location>
        <begin position="185"/>
        <end position="201"/>
    </location>
</feature>
<feature type="strand" evidence="6">
    <location>
        <begin position="205"/>
        <end position="207"/>
    </location>
</feature>
<feature type="strand" evidence="6">
    <location>
        <begin position="225"/>
        <end position="229"/>
    </location>
</feature>
<feature type="strand" evidence="6">
    <location>
        <begin position="246"/>
        <end position="249"/>
    </location>
</feature>
<feature type="strand" evidence="6">
    <location>
        <begin position="266"/>
        <end position="269"/>
    </location>
</feature>
<feature type="strand" evidence="6">
    <location>
        <begin position="286"/>
        <end position="288"/>
    </location>
</feature>
<feature type="strand" evidence="6">
    <location>
        <begin position="306"/>
        <end position="308"/>
    </location>
</feature>
<feature type="strand" evidence="6">
    <location>
        <begin position="326"/>
        <end position="328"/>
    </location>
</feature>
<feature type="strand" evidence="6">
    <location>
        <begin position="346"/>
        <end position="348"/>
    </location>
</feature>
<feature type="strand" evidence="6">
    <location>
        <begin position="366"/>
        <end position="368"/>
    </location>
</feature>
<feature type="strand" evidence="6">
    <location>
        <begin position="386"/>
        <end position="388"/>
    </location>
</feature>
<feature type="strand" evidence="6">
    <location>
        <begin position="406"/>
        <end position="408"/>
    </location>
</feature>
<feature type="strand" evidence="6">
    <location>
        <begin position="426"/>
        <end position="428"/>
    </location>
</feature>
<feature type="helix" evidence="6">
    <location>
        <begin position="439"/>
        <end position="443"/>
    </location>
</feature>
<feature type="strand" evidence="6">
    <location>
        <begin position="449"/>
        <end position="451"/>
    </location>
</feature>
<feature type="helix" evidence="6">
    <location>
        <begin position="459"/>
        <end position="470"/>
    </location>
</feature>
<feature type="strand" evidence="6">
    <location>
        <begin position="478"/>
        <end position="480"/>
    </location>
</feature>
<feature type="helix" evidence="6">
    <location>
        <begin position="495"/>
        <end position="500"/>
    </location>
</feature>
<feature type="helix" evidence="6">
    <location>
        <begin position="515"/>
        <end position="520"/>
    </location>
</feature>
<feature type="helix" evidence="6">
    <location>
        <begin position="526"/>
        <end position="536"/>
    </location>
</feature>
<feature type="helix" evidence="6">
    <location>
        <begin position="540"/>
        <end position="544"/>
    </location>
</feature>
<feature type="helix" evidence="6">
    <location>
        <begin position="548"/>
        <end position="560"/>
    </location>
</feature>
<feature type="helix" evidence="6">
    <location>
        <begin position="563"/>
        <end position="572"/>
    </location>
</feature>
<feature type="turn" evidence="6">
    <location>
        <begin position="573"/>
        <end position="578"/>
    </location>
</feature>
<feature type="helix" evidence="6">
    <location>
        <begin position="581"/>
        <end position="602"/>
    </location>
</feature>
<feature type="turn" evidence="6">
    <location>
        <begin position="603"/>
        <end position="607"/>
    </location>
</feature>
<feature type="helix" evidence="6">
    <location>
        <begin position="609"/>
        <end position="634"/>
    </location>
</feature>
<feature type="strand" evidence="6">
    <location>
        <begin position="637"/>
        <end position="639"/>
    </location>
</feature>
<feature type="helix" evidence="6">
    <location>
        <begin position="641"/>
        <end position="651"/>
    </location>
</feature>
<feature type="turn" evidence="6">
    <location>
        <begin position="652"/>
        <end position="657"/>
    </location>
</feature>
<feature type="helix" evidence="6">
    <location>
        <begin position="668"/>
        <end position="670"/>
    </location>
</feature>
<feature type="helix" evidence="6">
    <location>
        <begin position="675"/>
        <end position="698"/>
    </location>
</feature>
<feature type="helix" evidence="6">
    <location>
        <begin position="701"/>
        <end position="710"/>
    </location>
</feature>
<feature type="helix" evidence="6">
    <location>
        <begin position="712"/>
        <end position="736"/>
    </location>
</feature>
<feature type="turn" evidence="6">
    <location>
        <begin position="737"/>
        <end position="740"/>
    </location>
</feature>
<feature type="helix" evidence="6">
    <location>
        <begin position="747"/>
        <end position="777"/>
    </location>
</feature>
<feature type="helix" evidence="6">
    <location>
        <begin position="778"/>
        <end position="780"/>
    </location>
</feature>
<evidence type="ECO:0000250" key="1"/>
<evidence type="ECO:0000255" key="2">
    <source>
        <dbReference type="PROSITE-ProRule" id="PRU01398"/>
    </source>
</evidence>
<evidence type="ECO:0000269" key="3">
    <source>
    </source>
</evidence>
<evidence type="ECO:0000305" key="4"/>
<evidence type="ECO:0000305" key="5">
    <source>
    </source>
</evidence>
<evidence type="ECO:0007829" key="6">
    <source>
        <dbReference type="PDB" id="3G06"/>
    </source>
</evidence>
<name>SSPH2_SALTY</name>